<keyword id="KW-0007">Acetylation</keyword>
<keyword id="KW-0148">Chlorophyll</keyword>
<keyword id="KW-0150">Chloroplast</keyword>
<keyword id="KW-0157">Chromophore</keyword>
<keyword id="KW-0249">Electron transport</keyword>
<keyword id="KW-0408">Iron</keyword>
<keyword id="KW-0460">Magnesium</keyword>
<keyword id="KW-0472">Membrane</keyword>
<keyword id="KW-0479">Metal-binding</keyword>
<keyword id="KW-0560">Oxidoreductase</keyword>
<keyword id="KW-0597">Phosphoprotein</keyword>
<keyword id="KW-0602">Photosynthesis</keyword>
<keyword id="KW-0604">Photosystem II</keyword>
<keyword id="KW-0934">Plastid</keyword>
<keyword id="KW-0793">Thylakoid</keyword>
<keyword id="KW-0812">Transmembrane</keyword>
<keyword id="KW-1133">Transmembrane helix</keyword>
<keyword id="KW-0813">Transport</keyword>
<feature type="initiator methionine" description="Removed" evidence="1">
    <location>
        <position position="1"/>
    </location>
</feature>
<feature type="chain" id="PRO_0000090509" description="Photosystem II D2 protein">
    <location>
        <begin position="2"/>
        <end position="353"/>
    </location>
</feature>
<feature type="transmembrane region" description="Helical" evidence="2">
    <location>
        <begin position="41"/>
        <end position="61"/>
    </location>
</feature>
<feature type="transmembrane region" description="Helical" evidence="2">
    <location>
        <begin position="125"/>
        <end position="141"/>
    </location>
</feature>
<feature type="transmembrane region" description="Helical" evidence="2">
    <location>
        <begin position="153"/>
        <end position="166"/>
    </location>
</feature>
<feature type="transmembrane region" description="Helical" evidence="2">
    <location>
        <begin position="208"/>
        <end position="228"/>
    </location>
</feature>
<feature type="transmembrane region" description="Helical" evidence="2">
    <location>
        <begin position="279"/>
        <end position="295"/>
    </location>
</feature>
<feature type="binding site" description="axial binding residue" evidence="2">
    <location>
        <position position="118"/>
    </location>
    <ligand>
        <name>chlorophyll a</name>
        <dbReference type="ChEBI" id="CHEBI:58416"/>
        <label>ChlzD2</label>
    </ligand>
    <ligandPart>
        <name>Mg</name>
        <dbReference type="ChEBI" id="CHEBI:25107"/>
    </ligandPart>
</feature>
<feature type="binding site" evidence="2">
    <location>
        <position position="130"/>
    </location>
    <ligand>
        <name>pheophytin a</name>
        <dbReference type="ChEBI" id="CHEBI:136840"/>
        <label>D2</label>
    </ligand>
</feature>
<feature type="binding site" evidence="2">
    <location>
        <position position="143"/>
    </location>
    <ligand>
        <name>pheophytin a</name>
        <dbReference type="ChEBI" id="CHEBI:136840"/>
        <label>D2</label>
    </ligand>
</feature>
<feature type="binding site" description="axial binding residue" evidence="2">
    <location>
        <position position="198"/>
    </location>
    <ligand>
        <name>chlorophyll a</name>
        <dbReference type="ChEBI" id="CHEBI:58416"/>
        <label>PD2</label>
    </ligand>
    <ligandPart>
        <name>Mg</name>
        <dbReference type="ChEBI" id="CHEBI:25107"/>
    </ligandPart>
</feature>
<feature type="binding site" evidence="2">
    <location>
        <position position="215"/>
    </location>
    <ligand>
        <name>a plastoquinone</name>
        <dbReference type="ChEBI" id="CHEBI:17757"/>
        <label>Q(A)</label>
    </ligand>
</feature>
<feature type="binding site" evidence="2">
    <location>
        <position position="215"/>
    </location>
    <ligand>
        <name>Fe cation</name>
        <dbReference type="ChEBI" id="CHEBI:24875"/>
        <note>ligand shared with heterodimeric partner</note>
    </ligand>
</feature>
<feature type="binding site" evidence="2">
    <location>
        <position position="262"/>
    </location>
    <ligand>
        <name>a plastoquinone</name>
        <dbReference type="ChEBI" id="CHEBI:17757"/>
        <label>Q(A)</label>
    </ligand>
</feature>
<feature type="binding site" evidence="2">
    <location>
        <position position="269"/>
    </location>
    <ligand>
        <name>Fe cation</name>
        <dbReference type="ChEBI" id="CHEBI:24875"/>
        <note>ligand shared with heterodimeric partner</note>
    </ligand>
</feature>
<feature type="modified residue" description="N-acetylthreonine" evidence="1">
    <location>
        <position position="2"/>
    </location>
</feature>
<feature type="modified residue" description="Phosphothreonine" evidence="1">
    <location>
        <position position="2"/>
    </location>
</feature>
<name>PSBD_MARPO</name>
<reference key="1">
    <citation type="journal article" date="1986" name="Nature">
        <title>Chloroplast gene organization deduced from complete sequence of liverwort Marchantia polymorpha chloroplast DNA.</title>
        <authorList>
            <person name="Ohyama K."/>
            <person name="Fukuzawa H."/>
            <person name="Kohchi T."/>
            <person name="Shirai H."/>
            <person name="Sano T."/>
            <person name="Sano S."/>
            <person name="Umesono K."/>
            <person name="Shiki Y."/>
            <person name="Takeuchi M."/>
            <person name="Chang Z."/>
            <person name="Aota S."/>
            <person name="Inokuchi H."/>
            <person name="Ozeki H."/>
        </authorList>
    </citation>
    <scope>NUCLEOTIDE SEQUENCE [LARGE SCALE GENOMIC DNA]</scope>
</reference>
<reference key="2">
    <citation type="journal article" date="1988" name="J. Mol. Biol.">
        <title>Structure and organization of Marchantia polymorpha chloroplast genome. II. Gene organization of the large single copy region from rps'12 to atpB.</title>
        <authorList>
            <person name="Umesono K."/>
            <person name="Inokuchi H."/>
            <person name="Shiki Y."/>
            <person name="Takeuchi M."/>
            <person name="Chang Z."/>
            <person name="Fukuzawa H."/>
            <person name="Kohchi T."/>
            <person name="Shirai H."/>
            <person name="Ohyama K."/>
            <person name="Ozeki H."/>
        </authorList>
    </citation>
    <scope>NUCLEOTIDE SEQUENCE [GENOMIC DNA]</scope>
</reference>
<reference key="3">
    <citation type="journal article" date="1998" name="FEBS Lett.">
        <title>Thylakoid protein phosphorylation in evolutionally divergent species with oxygenic photosynthesis.</title>
        <authorList>
            <person name="Pursiheimo S."/>
            <person name="Rintamaeki E."/>
            <person name="Baena-Gonzalez E."/>
            <person name="Aro E.-M."/>
        </authorList>
    </citation>
    <scope>PHOSPHORYLATION</scope>
    <scope>SUBCELLULAR LOCATION</scope>
</reference>
<proteinExistence type="evidence at protein level"/>
<evidence type="ECO:0000250" key="1">
    <source>
        <dbReference type="UniProtKB" id="P56761"/>
    </source>
</evidence>
<evidence type="ECO:0000255" key="2">
    <source>
        <dbReference type="HAMAP-Rule" id="MF_01383"/>
    </source>
</evidence>
<evidence type="ECO:0000269" key="3">
    <source>
    </source>
</evidence>
<dbReference type="EC" id="1.10.3.9" evidence="2"/>
<dbReference type="EMBL" id="X04465">
    <property type="protein sequence ID" value="CAA28080.1"/>
    <property type="molecule type" value="Genomic_DNA"/>
</dbReference>
<dbReference type="PIR" id="A03463">
    <property type="entry name" value="F2LVD2"/>
</dbReference>
<dbReference type="RefSeq" id="NP_039294.1">
    <property type="nucleotide sequence ID" value="NC_001319.1"/>
</dbReference>
<dbReference type="SMR" id="P06404"/>
<dbReference type="GeneID" id="2702543"/>
<dbReference type="GO" id="GO:0009535">
    <property type="term" value="C:chloroplast thylakoid membrane"/>
    <property type="evidence" value="ECO:0007669"/>
    <property type="project" value="UniProtKB-SubCell"/>
</dbReference>
<dbReference type="GO" id="GO:0009523">
    <property type="term" value="C:photosystem II"/>
    <property type="evidence" value="ECO:0007669"/>
    <property type="project" value="UniProtKB-KW"/>
</dbReference>
<dbReference type="GO" id="GO:0016168">
    <property type="term" value="F:chlorophyll binding"/>
    <property type="evidence" value="ECO:0007669"/>
    <property type="project" value="UniProtKB-UniRule"/>
</dbReference>
<dbReference type="GO" id="GO:0045156">
    <property type="term" value="F:electron transporter, transferring electrons within the cyclic electron transport pathway of photosynthesis activity"/>
    <property type="evidence" value="ECO:0007669"/>
    <property type="project" value="InterPro"/>
</dbReference>
<dbReference type="GO" id="GO:0005506">
    <property type="term" value="F:iron ion binding"/>
    <property type="evidence" value="ECO:0007669"/>
    <property type="project" value="UniProtKB-UniRule"/>
</dbReference>
<dbReference type="GO" id="GO:0010242">
    <property type="term" value="F:oxygen evolving activity"/>
    <property type="evidence" value="ECO:0007669"/>
    <property type="project" value="UniProtKB-EC"/>
</dbReference>
<dbReference type="GO" id="GO:0009772">
    <property type="term" value="P:photosynthetic electron transport in photosystem II"/>
    <property type="evidence" value="ECO:0007669"/>
    <property type="project" value="InterPro"/>
</dbReference>
<dbReference type="CDD" id="cd09288">
    <property type="entry name" value="Photosystem-II_D2"/>
    <property type="match status" value="1"/>
</dbReference>
<dbReference type="FunFam" id="1.20.85.10:FF:000001">
    <property type="entry name" value="photosystem II D2 protein-like"/>
    <property type="match status" value="1"/>
</dbReference>
<dbReference type="Gene3D" id="1.20.85.10">
    <property type="entry name" value="Photosystem II protein D1-like"/>
    <property type="match status" value="1"/>
</dbReference>
<dbReference type="HAMAP" id="MF_01383">
    <property type="entry name" value="PSII_PsbD_D2"/>
    <property type="match status" value="1"/>
</dbReference>
<dbReference type="InterPro" id="IPR055266">
    <property type="entry name" value="D1/D2"/>
</dbReference>
<dbReference type="InterPro" id="IPR036854">
    <property type="entry name" value="Photo_II_D1/D2_sf"/>
</dbReference>
<dbReference type="InterPro" id="IPR000484">
    <property type="entry name" value="Photo_RC_L/M"/>
</dbReference>
<dbReference type="InterPro" id="IPR055265">
    <property type="entry name" value="Photo_RC_L/M_CS"/>
</dbReference>
<dbReference type="InterPro" id="IPR005868">
    <property type="entry name" value="PSII_PsbD/D2"/>
</dbReference>
<dbReference type="NCBIfam" id="TIGR01152">
    <property type="entry name" value="psbD"/>
    <property type="match status" value="1"/>
</dbReference>
<dbReference type="PANTHER" id="PTHR33149:SF12">
    <property type="entry name" value="PHOTOSYSTEM II D2 PROTEIN"/>
    <property type="match status" value="1"/>
</dbReference>
<dbReference type="PANTHER" id="PTHR33149">
    <property type="entry name" value="PHOTOSYSTEM II PROTEIN D1"/>
    <property type="match status" value="1"/>
</dbReference>
<dbReference type="Pfam" id="PF00124">
    <property type="entry name" value="Photo_RC"/>
    <property type="match status" value="1"/>
</dbReference>
<dbReference type="PRINTS" id="PR00256">
    <property type="entry name" value="REACTNCENTRE"/>
</dbReference>
<dbReference type="SUPFAM" id="SSF81483">
    <property type="entry name" value="Bacterial photosystem II reaction centre, L and M subunits"/>
    <property type="match status" value="1"/>
</dbReference>
<dbReference type="PROSITE" id="PS00244">
    <property type="entry name" value="REACTION_CENTER"/>
    <property type="match status" value="1"/>
</dbReference>
<geneLocation type="chloroplast"/>
<organism>
    <name type="scientific">Marchantia polymorpha</name>
    <name type="common">Common liverwort</name>
    <name type="synonym">Marchantia aquatica</name>
    <dbReference type="NCBI Taxonomy" id="3197"/>
    <lineage>
        <taxon>Eukaryota</taxon>
        <taxon>Viridiplantae</taxon>
        <taxon>Streptophyta</taxon>
        <taxon>Embryophyta</taxon>
        <taxon>Marchantiophyta</taxon>
        <taxon>Marchantiopsida</taxon>
        <taxon>Marchantiidae</taxon>
        <taxon>Marchantiales</taxon>
        <taxon>Marchantiaceae</taxon>
        <taxon>Marchantia</taxon>
    </lineage>
</organism>
<protein>
    <recommendedName>
        <fullName evidence="2">Photosystem II D2 protein</fullName>
        <shortName evidence="2">PSII D2 protein</shortName>
        <ecNumber evidence="2">1.10.3.9</ecNumber>
    </recommendedName>
    <alternativeName>
        <fullName evidence="2">Photosystem Q(A) protein</fullName>
    </alternativeName>
</protein>
<comment type="function">
    <text evidence="2">Photosystem II (PSII) is a light-driven water:plastoquinone oxidoreductase that uses light energy to abstract electrons from H(2)O, generating O(2) and a proton gradient subsequently used for ATP formation. It consists of a core antenna complex that captures photons, and an electron transfer chain that converts photonic excitation into a charge separation. The D1/D2 (PsbA/PsbD) reaction center heterodimer binds P680, the primary electron donor of PSII as well as several subsequent electron acceptors. D2 is needed for assembly of a stable PSII complex.</text>
</comment>
<comment type="catalytic activity">
    <reaction evidence="2">
        <text>2 a plastoquinone + 4 hnu + 2 H2O = 2 a plastoquinol + O2</text>
        <dbReference type="Rhea" id="RHEA:36359"/>
        <dbReference type="Rhea" id="RHEA-COMP:9561"/>
        <dbReference type="Rhea" id="RHEA-COMP:9562"/>
        <dbReference type="ChEBI" id="CHEBI:15377"/>
        <dbReference type="ChEBI" id="CHEBI:15379"/>
        <dbReference type="ChEBI" id="CHEBI:17757"/>
        <dbReference type="ChEBI" id="CHEBI:30212"/>
        <dbReference type="ChEBI" id="CHEBI:62192"/>
        <dbReference type="EC" id="1.10.3.9"/>
    </reaction>
</comment>
<comment type="cofactor">
    <text evidence="2">The D1/D2 heterodimer binds P680, chlorophylls that are the primary electron donor of PSII, and subsequent electron acceptors. It shares a non-heme iron and each subunit binds pheophytin, quinone, additional chlorophylls, carotenoids and lipids. There is also a Cl(-1) ion associated with D1 and D2, which is required for oxygen evolution. The PSII complex binds additional chlorophylls, carotenoids and specific lipids.</text>
</comment>
<comment type="subunit">
    <text evidence="2">PSII is composed of 1 copy each of membrane proteins PsbA, PsbB, PsbC, PsbD, PsbE, PsbF, PsbH, PsbI, PsbJ, PsbK, PsbL, PsbM, PsbT, PsbX, PsbY, PsbZ, Psb30/Ycf12, at least 3 peripheral proteins of the oxygen-evolving complex and a large number of cofactors. It forms dimeric complexes.</text>
</comment>
<comment type="subcellular location">
    <subcellularLocation>
        <location evidence="2 3">Plastid</location>
        <location evidence="2 3">Chloroplast thylakoid membrane</location>
        <topology evidence="2">Multi-pass membrane protein</topology>
    </subcellularLocation>
</comment>
<comment type="PTM">
    <text evidence="3">Phosphorylated on threonine residue(s); phosphorylation increases with increasing light levels.</text>
</comment>
<comment type="miscellaneous">
    <text evidence="2">2 of the reaction center chlorophylls (ChlD1 and ChlD2) are entirely coordinated by water.</text>
</comment>
<comment type="similarity">
    <text evidence="2">Belongs to the reaction center PufL/M/PsbA/D family.</text>
</comment>
<accession>P06404</accession>
<gene>
    <name evidence="2" type="primary">psbD</name>
</gene>
<sequence>MTIAIGKSSKEPKGLFDSMDDWLRRDRFVFVGWSGLLLFPCAYFALGGWFTGTTFVTSWYTHGLASSYLEGCNFLTAAVSTPANSLAHSLLLLWGPEAQGDFTRWCQLGGLWTFVALHGAFGLIGFMLRQFELARSVQLRPYNAIAFSGPIAVFVSVFLIYPLGQSGWFFAPSFGVAAIFRFILFFQGFHNWTLNPFHMMGVAGVLGAALLCAIHGATVENTLFEDGDGANTFRAFNPTQSEETYSMVTANRFWSQIFGVAFSNKRWLHFFMLFVPVTGLWMSAIGVVGLALNLRAYDFVSQEIRAAEDPEFETFYTKNILLNEGIRAWMAAQDQPHENLVFPEEVLPRGNAL</sequence>